<feature type="chain" id="PRO_1000062662" description="Acetyl-coenzyme A carboxylase carboxyl transferase subunit alpha">
    <location>
        <begin position="1"/>
        <end position="317"/>
    </location>
</feature>
<feature type="domain" description="CoA carboxyltransferase C-terminal" evidence="2">
    <location>
        <begin position="40"/>
        <end position="293"/>
    </location>
</feature>
<keyword id="KW-0067">ATP-binding</keyword>
<keyword id="KW-0963">Cytoplasm</keyword>
<keyword id="KW-0275">Fatty acid biosynthesis</keyword>
<keyword id="KW-0276">Fatty acid metabolism</keyword>
<keyword id="KW-0444">Lipid biosynthesis</keyword>
<keyword id="KW-0443">Lipid metabolism</keyword>
<keyword id="KW-0547">Nucleotide-binding</keyword>
<keyword id="KW-1185">Reference proteome</keyword>
<keyword id="KW-0808">Transferase</keyword>
<sequence>MHNYLDFEKPISDLEGKIIELKKLASEDESIDTTDEIGRLEVRVREAIVEIYSKLNAWQKTQVARHPQRPHFVDYAKTLFQEFTPLAGDRKFSEDAAIQAGLARFRGQPVAVIGQEKGNDTKSRLKHNFGSPRPEGYRKAIRILEMADRFGLPVISLVDTAGAYPGVGAEERGQAEAIARSTEMCLGVKVPLVSVVIGEGGSGGAIAIATGNRVYMLEHSIYSVISPEGAASILWRDSTRAREAATNMKITAEDLKSLGVIDGIISEPLGGAHRDPDSVIAATGDVIANALGEMASRSGEQLRNERRQKFLNMGRNL</sequence>
<dbReference type="EC" id="2.1.3.15" evidence="1"/>
<dbReference type="EMBL" id="CP000133">
    <property type="protein sequence ID" value="ABC92576.1"/>
    <property type="molecule type" value="Genomic_DNA"/>
</dbReference>
<dbReference type="RefSeq" id="WP_011427025.1">
    <property type="nucleotide sequence ID" value="NC_007761.1"/>
</dbReference>
<dbReference type="SMR" id="Q2K3L0"/>
<dbReference type="KEGG" id="ret:RHE_CH03828"/>
<dbReference type="eggNOG" id="COG0825">
    <property type="taxonomic scope" value="Bacteria"/>
</dbReference>
<dbReference type="HOGENOM" id="CLU_015486_0_2_5"/>
<dbReference type="OrthoDB" id="9808023at2"/>
<dbReference type="UniPathway" id="UPA00655">
    <property type="reaction ID" value="UER00711"/>
</dbReference>
<dbReference type="Proteomes" id="UP000001936">
    <property type="component" value="Chromosome"/>
</dbReference>
<dbReference type="GO" id="GO:0009317">
    <property type="term" value="C:acetyl-CoA carboxylase complex"/>
    <property type="evidence" value="ECO:0007669"/>
    <property type="project" value="InterPro"/>
</dbReference>
<dbReference type="GO" id="GO:0003989">
    <property type="term" value="F:acetyl-CoA carboxylase activity"/>
    <property type="evidence" value="ECO:0007669"/>
    <property type="project" value="InterPro"/>
</dbReference>
<dbReference type="GO" id="GO:0005524">
    <property type="term" value="F:ATP binding"/>
    <property type="evidence" value="ECO:0007669"/>
    <property type="project" value="UniProtKB-KW"/>
</dbReference>
<dbReference type="GO" id="GO:0016743">
    <property type="term" value="F:carboxyl- or carbamoyltransferase activity"/>
    <property type="evidence" value="ECO:0007669"/>
    <property type="project" value="UniProtKB-UniRule"/>
</dbReference>
<dbReference type="GO" id="GO:0006633">
    <property type="term" value="P:fatty acid biosynthetic process"/>
    <property type="evidence" value="ECO:0007669"/>
    <property type="project" value="UniProtKB-KW"/>
</dbReference>
<dbReference type="GO" id="GO:2001295">
    <property type="term" value="P:malonyl-CoA biosynthetic process"/>
    <property type="evidence" value="ECO:0007669"/>
    <property type="project" value="UniProtKB-UniRule"/>
</dbReference>
<dbReference type="Gene3D" id="3.90.226.10">
    <property type="entry name" value="2-enoyl-CoA Hydratase, Chain A, domain 1"/>
    <property type="match status" value="1"/>
</dbReference>
<dbReference type="HAMAP" id="MF_00823">
    <property type="entry name" value="AcetylCoA_CT_alpha"/>
    <property type="match status" value="1"/>
</dbReference>
<dbReference type="InterPro" id="IPR001095">
    <property type="entry name" value="Acetyl_CoA_COase_a_su"/>
</dbReference>
<dbReference type="InterPro" id="IPR029045">
    <property type="entry name" value="ClpP/crotonase-like_dom_sf"/>
</dbReference>
<dbReference type="InterPro" id="IPR011763">
    <property type="entry name" value="COA_CT_C"/>
</dbReference>
<dbReference type="NCBIfam" id="TIGR00513">
    <property type="entry name" value="accA"/>
    <property type="match status" value="1"/>
</dbReference>
<dbReference type="NCBIfam" id="NF041504">
    <property type="entry name" value="AccA_sub"/>
    <property type="match status" value="1"/>
</dbReference>
<dbReference type="NCBIfam" id="NF004344">
    <property type="entry name" value="PRK05724.1"/>
    <property type="match status" value="1"/>
</dbReference>
<dbReference type="PANTHER" id="PTHR42853">
    <property type="entry name" value="ACETYL-COENZYME A CARBOXYLASE CARBOXYL TRANSFERASE SUBUNIT ALPHA"/>
    <property type="match status" value="1"/>
</dbReference>
<dbReference type="PANTHER" id="PTHR42853:SF3">
    <property type="entry name" value="ACETYL-COENZYME A CARBOXYLASE CARBOXYL TRANSFERASE SUBUNIT ALPHA, CHLOROPLASTIC"/>
    <property type="match status" value="1"/>
</dbReference>
<dbReference type="Pfam" id="PF03255">
    <property type="entry name" value="ACCA"/>
    <property type="match status" value="1"/>
</dbReference>
<dbReference type="PRINTS" id="PR01069">
    <property type="entry name" value="ACCCTRFRASEA"/>
</dbReference>
<dbReference type="SUPFAM" id="SSF52096">
    <property type="entry name" value="ClpP/crotonase"/>
    <property type="match status" value="1"/>
</dbReference>
<dbReference type="PROSITE" id="PS50989">
    <property type="entry name" value="COA_CT_CTER"/>
    <property type="match status" value="1"/>
</dbReference>
<comment type="function">
    <text evidence="1">Component of the acetyl coenzyme A carboxylase (ACC) complex. First, biotin carboxylase catalyzes the carboxylation of biotin on its carrier protein (BCCP) and then the CO(2) group is transferred by the carboxyltransferase to acetyl-CoA to form malonyl-CoA.</text>
</comment>
<comment type="catalytic activity">
    <reaction evidence="1">
        <text>N(6)-carboxybiotinyl-L-lysyl-[protein] + acetyl-CoA = N(6)-biotinyl-L-lysyl-[protein] + malonyl-CoA</text>
        <dbReference type="Rhea" id="RHEA:54728"/>
        <dbReference type="Rhea" id="RHEA-COMP:10505"/>
        <dbReference type="Rhea" id="RHEA-COMP:10506"/>
        <dbReference type="ChEBI" id="CHEBI:57288"/>
        <dbReference type="ChEBI" id="CHEBI:57384"/>
        <dbReference type="ChEBI" id="CHEBI:83144"/>
        <dbReference type="ChEBI" id="CHEBI:83145"/>
        <dbReference type="EC" id="2.1.3.15"/>
    </reaction>
</comment>
<comment type="pathway">
    <text evidence="1">Lipid metabolism; malonyl-CoA biosynthesis; malonyl-CoA from acetyl-CoA: step 1/1.</text>
</comment>
<comment type="subunit">
    <text evidence="1">Acetyl-CoA carboxylase is a heterohexamer composed of biotin carboxyl carrier protein (AccB), biotin carboxylase (AccC) and two subunits each of ACCase subunit alpha (AccA) and ACCase subunit beta (AccD).</text>
</comment>
<comment type="subcellular location">
    <subcellularLocation>
        <location evidence="1">Cytoplasm</location>
    </subcellularLocation>
</comment>
<comment type="similarity">
    <text evidence="1">Belongs to the AccA family.</text>
</comment>
<organism>
    <name type="scientific">Rhizobium etli (strain ATCC 51251 / DSM 11541 / JCM 21823 / NBRC 15573 / CFN 42)</name>
    <dbReference type="NCBI Taxonomy" id="347834"/>
    <lineage>
        <taxon>Bacteria</taxon>
        <taxon>Pseudomonadati</taxon>
        <taxon>Pseudomonadota</taxon>
        <taxon>Alphaproteobacteria</taxon>
        <taxon>Hyphomicrobiales</taxon>
        <taxon>Rhizobiaceae</taxon>
        <taxon>Rhizobium/Agrobacterium group</taxon>
        <taxon>Rhizobium</taxon>
    </lineage>
</organism>
<protein>
    <recommendedName>
        <fullName evidence="1">Acetyl-coenzyme A carboxylase carboxyl transferase subunit alpha</fullName>
        <shortName evidence="1">ACCase subunit alpha</shortName>
        <shortName evidence="1">Acetyl-CoA carboxylase carboxyltransferase subunit alpha</shortName>
        <ecNumber evidence="1">2.1.3.15</ecNumber>
    </recommendedName>
</protein>
<reference key="1">
    <citation type="journal article" date="2006" name="Proc. Natl. Acad. Sci. U.S.A.">
        <title>The partitioned Rhizobium etli genome: genetic and metabolic redundancy in seven interacting replicons.</title>
        <authorList>
            <person name="Gonzalez V."/>
            <person name="Santamaria R.I."/>
            <person name="Bustos P."/>
            <person name="Hernandez-Gonzalez I."/>
            <person name="Medrano-Soto A."/>
            <person name="Moreno-Hagelsieb G."/>
            <person name="Janga S.C."/>
            <person name="Ramirez M.A."/>
            <person name="Jimenez-Jacinto V."/>
            <person name="Collado-Vides J."/>
            <person name="Davila G."/>
        </authorList>
    </citation>
    <scope>NUCLEOTIDE SEQUENCE [LARGE SCALE GENOMIC DNA]</scope>
    <source>
        <strain>ATCC 51251 / DSM 11541 / JCM 21823 / NBRC 15573 / CFN 42</strain>
    </source>
</reference>
<name>ACCA_RHIEC</name>
<proteinExistence type="inferred from homology"/>
<gene>
    <name evidence="1" type="primary">accA</name>
    <name type="ordered locus">RHE_CH03828</name>
</gene>
<evidence type="ECO:0000255" key="1">
    <source>
        <dbReference type="HAMAP-Rule" id="MF_00823"/>
    </source>
</evidence>
<evidence type="ECO:0000255" key="2">
    <source>
        <dbReference type="PROSITE-ProRule" id="PRU01137"/>
    </source>
</evidence>
<accession>Q2K3L0</accession>